<organism>
    <name type="scientific">Streptococcus pyogenes serotype M6 (strain ATCC BAA-946 / MGAS10394)</name>
    <dbReference type="NCBI Taxonomy" id="286636"/>
    <lineage>
        <taxon>Bacteria</taxon>
        <taxon>Bacillati</taxon>
        <taxon>Bacillota</taxon>
        <taxon>Bacilli</taxon>
        <taxon>Lactobacillales</taxon>
        <taxon>Streptococcaceae</taxon>
        <taxon>Streptococcus</taxon>
    </lineage>
</organism>
<name>FOLD_STRP6</name>
<protein>
    <recommendedName>
        <fullName evidence="1">Bifunctional protein FolD</fullName>
    </recommendedName>
    <domain>
        <recommendedName>
            <fullName evidence="1">Methylenetetrahydrofolate dehydrogenase</fullName>
            <ecNumber evidence="1">1.5.1.5</ecNumber>
        </recommendedName>
    </domain>
    <domain>
        <recommendedName>
            <fullName evidence="1">Methenyltetrahydrofolate cyclohydrolase</fullName>
            <ecNumber evidence="1">3.5.4.9</ecNumber>
        </recommendedName>
    </domain>
</protein>
<feature type="chain" id="PRO_0000268522" description="Bifunctional protein FolD">
    <location>
        <begin position="1"/>
        <end position="284"/>
    </location>
</feature>
<feature type="binding site" evidence="1">
    <location>
        <begin position="165"/>
        <end position="167"/>
    </location>
    <ligand>
        <name>NADP(+)</name>
        <dbReference type="ChEBI" id="CHEBI:58349"/>
    </ligand>
</feature>
<feature type="binding site" evidence="1">
    <location>
        <position position="190"/>
    </location>
    <ligand>
        <name>NADP(+)</name>
        <dbReference type="ChEBI" id="CHEBI:58349"/>
    </ligand>
</feature>
<reference key="1">
    <citation type="journal article" date="2004" name="J. Infect. Dis.">
        <title>Progress toward characterization of the group A Streptococcus metagenome: complete genome sequence of a macrolide-resistant serotype M6 strain.</title>
        <authorList>
            <person name="Banks D.J."/>
            <person name="Porcella S.F."/>
            <person name="Barbian K.D."/>
            <person name="Beres S.B."/>
            <person name="Philips L.E."/>
            <person name="Voyich J.M."/>
            <person name="DeLeo F.R."/>
            <person name="Martin J.M."/>
            <person name="Somerville G.A."/>
            <person name="Musser J.M."/>
        </authorList>
    </citation>
    <scope>NUCLEOTIDE SEQUENCE [LARGE SCALE GENOMIC DNA]</scope>
    <source>
        <strain>ATCC BAA-946 / MGAS10394</strain>
    </source>
</reference>
<proteinExistence type="inferred from homology"/>
<keyword id="KW-0028">Amino-acid biosynthesis</keyword>
<keyword id="KW-0368">Histidine biosynthesis</keyword>
<keyword id="KW-0378">Hydrolase</keyword>
<keyword id="KW-0486">Methionine biosynthesis</keyword>
<keyword id="KW-0511">Multifunctional enzyme</keyword>
<keyword id="KW-0521">NADP</keyword>
<keyword id="KW-0554">One-carbon metabolism</keyword>
<keyword id="KW-0560">Oxidoreductase</keyword>
<keyword id="KW-0658">Purine biosynthesis</keyword>
<sequence>MTELIDGKALAQKMQQELAAKVNNLKQKKGIVPGLAVILVGDDPASQVYVRNKERAALTVGFKSETVRLSEFICQEELIAVIERYNADNTIHGILVQLPLPNHINDKKIILAIDPKKDVDGFHPMNTGHLWSGRPLMVPCTPSGIMELLREYNVNLEGKHAVIIGRSNIVGKPMAQLLLDKNATVTLTHSRTRQLEEVCRCADVLIVAIGQGHFITKQYIKEGAIVIDVGMNRDDNGKLIGDVAFDEVAEVAAKITPVPGGVGPMTIAMLLEQTYQSALRSTHK</sequence>
<gene>
    <name evidence="1" type="primary">folD</name>
    <name type="ordered locus">M6_Spy1254</name>
</gene>
<dbReference type="EC" id="1.5.1.5" evidence="1"/>
<dbReference type="EC" id="3.5.4.9" evidence="1"/>
<dbReference type="EMBL" id="CP000003">
    <property type="protein sequence ID" value="AAT87389.1"/>
    <property type="status" value="ALT_INIT"/>
    <property type="molecule type" value="Genomic_DNA"/>
</dbReference>
<dbReference type="RefSeq" id="WP_002989114.1">
    <property type="nucleotide sequence ID" value="NC_006086.1"/>
</dbReference>
<dbReference type="SMR" id="Q5XB24"/>
<dbReference type="KEGG" id="spa:M6_Spy1254"/>
<dbReference type="HOGENOM" id="CLU_034045_2_1_9"/>
<dbReference type="UniPathway" id="UPA00193"/>
<dbReference type="Proteomes" id="UP000001167">
    <property type="component" value="Chromosome"/>
</dbReference>
<dbReference type="GO" id="GO:0005829">
    <property type="term" value="C:cytosol"/>
    <property type="evidence" value="ECO:0007669"/>
    <property type="project" value="TreeGrafter"/>
</dbReference>
<dbReference type="GO" id="GO:0004477">
    <property type="term" value="F:methenyltetrahydrofolate cyclohydrolase activity"/>
    <property type="evidence" value="ECO:0007669"/>
    <property type="project" value="UniProtKB-UniRule"/>
</dbReference>
<dbReference type="GO" id="GO:0004488">
    <property type="term" value="F:methylenetetrahydrofolate dehydrogenase (NADP+) activity"/>
    <property type="evidence" value="ECO:0007669"/>
    <property type="project" value="UniProtKB-UniRule"/>
</dbReference>
<dbReference type="GO" id="GO:0000105">
    <property type="term" value="P:L-histidine biosynthetic process"/>
    <property type="evidence" value="ECO:0007669"/>
    <property type="project" value="UniProtKB-KW"/>
</dbReference>
<dbReference type="GO" id="GO:0009086">
    <property type="term" value="P:methionine biosynthetic process"/>
    <property type="evidence" value="ECO:0007669"/>
    <property type="project" value="UniProtKB-KW"/>
</dbReference>
<dbReference type="GO" id="GO:0006164">
    <property type="term" value="P:purine nucleotide biosynthetic process"/>
    <property type="evidence" value="ECO:0007669"/>
    <property type="project" value="UniProtKB-KW"/>
</dbReference>
<dbReference type="GO" id="GO:0035999">
    <property type="term" value="P:tetrahydrofolate interconversion"/>
    <property type="evidence" value="ECO:0007669"/>
    <property type="project" value="UniProtKB-UniRule"/>
</dbReference>
<dbReference type="CDD" id="cd01080">
    <property type="entry name" value="NAD_bind_m-THF_DH_Cyclohyd"/>
    <property type="match status" value="1"/>
</dbReference>
<dbReference type="FunFam" id="3.40.50.10860:FF:000001">
    <property type="entry name" value="Bifunctional protein FolD"/>
    <property type="match status" value="1"/>
</dbReference>
<dbReference type="FunFam" id="3.40.50.720:FF:000094">
    <property type="entry name" value="Bifunctional protein FolD"/>
    <property type="match status" value="1"/>
</dbReference>
<dbReference type="Gene3D" id="3.40.50.10860">
    <property type="entry name" value="Leucine Dehydrogenase, chain A, domain 1"/>
    <property type="match status" value="1"/>
</dbReference>
<dbReference type="Gene3D" id="3.40.50.720">
    <property type="entry name" value="NAD(P)-binding Rossmann-like Domain"/>
    <property type="match status" value="1"/>
</dbReference>
<dbReference type="HAMAP" id="MF_01576">
    <property type="entry name" value="THF_DHG_CYH"/>
    <property type="match status" value="1"/>
</dbReference>
<dbReference type="InterPro" id="IPR046346">
    <property type="entry name" value="Aminoacid_DH-like_N_sf"/>
</dbReference>
<dbReference type="InterPro" id="IPR036291">
    <property type="entry name" value="NAD(P)-bd_dom_sf"/>
</dbReference>
<dbReference type="InterPro" id="IPR000672">
    <property type="entry name" value="THF_DH/CycHdrlase"/>
</dbReference>
<dbReference type="InterPro" id="IPR020630">
    <property type="entry name" value="THF_DH/CycHdrlase_cat_dom"/>
</dbReference>
<dbReference type="InterPro" id="IPR020867">
    <property type="entry name" value="THF_DH/CycHdrlase_CS"/>
</dbReference>
<dbReference type="InterPro" id="IPR020631">
    <property type="entry name" value="THF_DH/CycHdrlase_NAD-bd_dom"/>
</dbReference>
<dbReference type="NCBIfam" id="NF008058">
    <property type="entry name" value="PRK10792.1"/>
    <property type="match status" value="1"/>
</dbReference>
<dbReference type="NCBIfam" id="NF010776">
    <property type="entry name" value="PRK14179.1"/>
    <property type="match status" value="1"/>
</dbReference>
<dbReference type="NCBIfam" id="NF010783">
    <property type="entry name" value="PRK14186.1"/>
    <property type="match status" value="1"/>
</dbReference>
<dbReference type="NCBIfam" id="NF010785">
    <property type="entry name" value="PRK14188.1"/>
    <property type="match status" value="1"/>
</dbReference>
<dbReference type="PANTHER" id="PTHR48099:SF5">
    <property type="entry name" value="C-1-TETRAHYDROFOLATE SYNTHASE, CYTOPLASMIC"/>
    <property type="match status" value="1"/>
</dbReference>
<dbReference type="PANTHER" id="PTHR48099">
    <property type="entry name" value="C-1-TETRAHYDROFOLATE SYNTHASE, CYTOPLASMIC-RELATED"/>
    <property type="match status" value="1"/>
</dbReference>
<dbReference type="Pfam" id="PF00763">
    <property type="entry name" value="THF_DHG_CYH"/>
    <property type="match status" value="1"/>
</dbReference>
<dbReference type="Pfam" id="PF02882">
    <property type="entry name" value="THF_DHG_CYH_C"/>
    <property type="match status" value="1"/>
</dbReference>
<dbReference type="PRINTS" id="PR00085">
    <property type="entry name" value="THFDHDRGNASE"/>
</dbReference>
<dbReference type="SUPFAM" id="SSF53223">
    <property type="entry name" value="Aminoacid dehydrogenase-like, N-terminal domain"/>
    <property type="match status" value="1"/>
</dbReference>
<dbReference type="SUPFAM" id="SSF51735">
    <property type="entry name" value="NAD(P)-binding Rossmann-fold domains"/>
    <property type="match status" value="1"/>
</dbReference>
<dbReference type="PROSITE" id="PS00766">
    <property type="entry name" value="THF_DHG_CYH_1"/>
    <property type="match status" value="1"/>
</dbReference>
<dbReference type="PROSITE" id="PS00767">
    <property type="entry name" value="THF_DHG_CYH_2"/>
    <property type="match status" value="1"/>
</dbReference>
<comment type="function">
    <text evidence="1">Catalyzes the oxidation of 5,10-methylenetetrahydrofolate to 5,10-methenyltetrahydrofolate and then the hydrolysis of 5,10-methenyltetrahydrofolate to 10-formyltetrahydrofolate.</text>
</comment>
<comment type="catalytic activity">
    <reaction evidence="1">
        <text>(6R)-5,10-methylene-5,6,7,8-tetrahydrofolate + NADP(+) = (6R)-5,10-methenyltetrahydrofolate + NADPH</text>
        <dbReference type="Rhea" id="RHEA:22812"/>
        <dbReference type="ChEBI" id="CHEBI:15636"/>
        <dbReference type="ChEBI" id="CHEBI:57455"/>
        <dbReference type="ChEBI" id="CHEBI:57783"/>
        <dbReference type="ChEBI" id="CHEBI:58349"/>
        <dbReference type="EC" id="1.5.1.5"/>
    </reaction>
</comment>
<comment type="catalytic activity">
    <reaction evidence="1">
        <text>(6R)-5,10-methenyltetrahydrofolate + H2O = (6R)-10-formyltetrahydrofolate + H(+)</text>
        <dbReference type="Rhea" id="RHEA:23700"/>
        <dbReference type="ChEBI" id="CHEBI:15377"/>
        <dbReference type="ChEBI" id="CHEBI:15378"/>
        <dbReference type="ChEBI" id="CHEBI:57455"/>
        <dbReference type="ChEBI" id="CHEBI:195366"/>
        <dbReference type="EC" id="3.5.4.9"/>
    </reaction>
</comment>
<comment type="pathway">
    <text evidence="1">One-carbon metabolism; tetrahydrofolate interconversion.</text>
</comment>
<comment type="subunit">
    <text evidence="1">Homodimer.</text>
</comment>
<comment type="similarity">
    <text evidence="1">Belongs to the tetrahydrofolate dehydrogenase/cyclohydrolase family.</text>
</comment>
<comment type="sequence caution" evidence="2">
    <conflict type="erroneous initiation">
        <sequence resource="EMBL-CDS" id="AAT87389"/>
    </conflict>
</comment>
<evidence type="ECO:0000255" key="1">
    <source>
        <dbReference type="HAMAP-Rule" id="MF_01576"/>
    </source>
</evidence>
<evidence type="ECO:0000305" key="2"/>
<accession>Q5XB24</accession>